<comment type="function">
    <text evidence="2">Component of the eukaryotic translation initiation factor 3 (eIF-3) complex, which is involved in protein synthesis of a specialized repertoire of mRNAs and, together with other initiation factors, stimulates binding of mRNA and methionyl-tRNAi to the 40S ribosome. The eIF-3 complex specifically targets and initiates translation of a subset of mRNAs involved in cell proliferation.</text>
</comment>
<comment type="subunit">
    <text evidence="1 2">Component of the eukaryotic translation initiation factor 3 (eIF-3) complex. The eIF-3 complex interacts with pix. Interacts with mxt (By similarity).</text>
</comment>
<comment type="subcellular location">
    <subcellularLocation>
        <location evidence="2">Cytoplasm</location>
    </subcellularLocation>
</comment>
<comment type="similarity">
    <text evidence="2">Belongs to the eIF-3 subunit H family.</text>
</comment>
<sequence length="337" mass="38248">MANRGARHARTEDTENTINYVQCDGLAVMKMVKHCHEESSNMDLAQGALLGLVVDKCLEITNCFPFPKSGDETMDDETYQLTVMRHLRRVNVDHLHVGWYQSSDVGNSLSLALLESQYHYQTSIEESVVVVYDTQKSSRGFLCLKAYRLTPQAIQMYKDSDFTPEAFRTLKVGYESLFAEIPIVIKNSPLTNIMMSELNELLPEDKGHNFLDLGTASVLENHMRSLIERVDELYQESVRYNKYQQVVFKQDTEKHRALAKLAAENAVRTSKGEPTVPEEEVIKQFRPMPVPARLTATITSGQINTHAQHIAQFCSQSLAKLFITEALQNAKETKEIK</sequence>
<feature type="chain" id="PRO_0000365187" description="Eukaryotic translation initiation factor 3 subunit H">
    <location>
        <begin position="1"/>
        <end position="337"/>
    </location>
</feature>
<feature type="domain" description="MPN" evidence="3">
    <location>
        <begin position="21"/>
        <end position="153"/>
    </location>
</feature>
<dbReference type="EMBL" id="CH916368">
    <property type="protein sequence ID" value="EDW03885.1"/>
    <property type="molecule type" value="Genomic_DNA"/>
</dbReference>
<dbReference type="SMR" id="B4JAS7"/>
<dbReference type="FunCoup" id="B4JAS7">
    <property type="interactions" value="2281"/>
</dbReference>
<dbReference type="STRING" id="7222.B4JAS7"/>
<dbReference type="MEROPS" id="M67.971"/>
<dbReference type="EnsemblMetazoa" id="FBtr0145683">
    <property type="protein sequence ID" value="FBpp0144175"/>
    <property type="gene ID" value="FBgn0117750"/>
</dbReference>
<dbReference type="EnsemblMetazoa" id="XM_001988982.2">
    <property type="protein sequence ID" value="XP_001989018.1"/>
    <property type="gene ID" value="LOC6562304"/>
</dbReference>
<dbReference type="GeneID" id="6562304"/>
<dbReference type="KEGG" id="dgr:6562304"/>
<dbReference type="CTD" id="8667"/>
<dbReference type="eggNOG" id="KOG1560">
    <property type="taxonomic scope" value="Eukaryota"/>
</dbReference>
<dbReference type="HOGENOM" id="CLU_044094_0_0_1"/>
<dbReference type="InParanoid" id="B4JAS7"/>
<dbReference type="OMA" id="WYQSTYF"/>
<dbReference type="OrthoDB" id="10265695at2759"/>
<dbReference type="PhylomeDB" id="B4JAS7"/>
<dbReference type="ChiTaRS" id="eIF-3p40">
    <property type="organism name" value="fly"/>
</dbReference>
<dbReference type="Proteomes" id="UP000001070">
    <property type="component" value="Unassembled WGS sequence"/>
</dbReference>
<dbReference type="GO" id="GO:0016282">
    <property type="term" value="C:eukaryotic 43S preinitiation complex"/>
    <property type="evidence" value="ECO:0007669"/>
    <property type="project" value="UniProtKB-UniRule"/>
</dbReference>
<dbReference type="GO" id="GO:0033290">
    <property type="term" value="C:eukaryotic 48S preinitiation complex"/>
    <property type="evidence" value="ECO:0007669"/>
    <property type="project" value="UniProtKB-UniRule"/>
</dbReference>
<dbReference type="GO" id="GO:0005852">
    <property type="term" value="C:eukaryotic translation initiation factor 3 complex"/>
    <property type="evidence" value="ECO:0007669"/>
    <property type="project" value="UniProtKB-UniRule"/>
</dbReference>
<dbReference type="GO" id="GO:0008237">
    <property type="term" value="F:metallopeptidase activity"/>
    <property type="evidence" value="ECO:0007669"/>
    <property type="project" value="InterPro"/>
</dbReference>
<dbReference type="GO" id="GO:0003743">
    <property type="term" value="F:translation initiation factor activity"/>
    <property type="evidence" value="ECO:0007669"/>
    <property type="project" value="UniProtKB-UniRule"/>
</dbReference>
<dbReference type="GO" id="GO:0001732">
    <property type="term" value="P:formation of cytoplasmic translation initiation complex"/>
    <property type="evidence" value="ECO:0007669"/>
    <property type="project" value="UniProtKB-UniRule"/>
</dbReference>
<dbReference type="GO" id="GO:0045747">
    <property type="term" value="P:positive regulation of Notch signaling pathway"/>
    <property type="evidence" value="ECO:0007669"/>
    <property type="project" value="EnsemblMetazoa"/>
</dbReference>
<dbReference type="CDD" id="cd08065">
    <property type="entry name" value="MPN_eIF3h"/>
    <property type="match status" value="1"/>
</dbReference>
<dbReference type="FunFam" id="3.40.140.10:FF:000045">
    <property type="entry name" value="Eukaryotic translation initiation factor 3 subunit H"/>
    <property type="match status" value="1"/>
</dbReference>
<dbReference type="Gene3D" id="3.40.140.10">
    <property type="entry name" value="Cytidine Deaminase, domain 2"/>
    <property type="match status" value="1"/>
</dbReference>
<dbReference type="HAMAP" id="MF_03007">
    <property type="entry name" value="eIF3h"/>
    <property type="match status" value="1"/>
</dbReference>
<dbReference type="InterPro" id="IPR027524">
    <property type="entry name" value="eIF3h"/>
</dbReference>
<dbReference type="InterPro" id="IPR045810">
    <property type="entry name" value="eIF3h_C"/>
</dbReference>
<dbReference type="InterPro" id="IPR000555">
    <property type="entry name" value="JAMM/MPN+_dom"/>
</dbReference>
<dbReference type="InterPro" id="IPR050242">
    <property type="entry name" value="JAMM_MPN+_peptidase_M67A"/>
</dbReference>
<dbReference type="InterPro" id="IPR037518">
    <property type="entry name" value="MPN"/>
</dbReference>
<dbReference type="PANTHER" id="PTHR10410">
    <property type="entry name" value="EUKARYOTIC TRANSLATION INITIATION FACTOR 3 -RELATED"/>
    <property type="match status" value="1"/>
</dbReference>
<dbReference type="Pfam" id="PF19445">
    <property type="entry name" value="eIF3h_C"/>
    <property type="match status" value="1"/>
</dbReference>
<dbReference type="Pfam" id="PF01398">
    <property type="entry name" value="JAB"/>
    <property type="match status" value="1"/>
</dbReference>
<dbReference type="SMART" id="SM00232">
    <property type="entry name" value="JAB_MPN"/>
    <property type="match status" value="1"/>
</dbReference>
<dbReference type="PROSITE" id="PS50249">
    <property type="entry name" value="MPN"/>
    <property type="match status" value="1"/>
</dbReference>
<organism>
    <name type="scientific">Drosophila grimshawi</name>
    <name type="common">Hawaiian fruit fly</name>
    <name type="synonym">Idiomyia grimshawi</name>
    <dbReference type="NCBI Taxonomy" id="7222"/>
    <lineage>
        <taxon>Eukaryota</taxon>
        <taxon>Metazoa</taxon>
        <taxon>Ecdysozoa</taxon>
        <taxon>Arthropoda</taxon>
        <taxon>Hexapoda</taxon>
        <taxon>Insecta</taxon>
        <taxon>Pterygota</taxon>
        <taxon>Neoptera</taxon>
        <taxon>Endopterygota</taxon>
        <taxon>Diptera</taxon>
        <taxon>Brachycera</taxon>
        <taxon>Muscomorpha</taxon>
        <taxon>Ephydroidea</taxon>
        <taxon>Drosophilidae</taxon>
        <taxon>Drosophila</taxon>
        <taxon>Hawaiian Drosophila</taxon>
    </lineage>
</organism>
<gene>
    <name evidence="2" type="primary">eIF-3p40</name>
    <name evidence="2" type="synonym">eif3-S3</name>
    <name type="ORF">GH10269</name>
</gene>
<protein>
    <recommendedName>
        <fullName evidence="2">Eukaryotic translation initiation factor 3 subunit H</fullName>
        <shortName evidence="2">eIF3h</shortName>
    </recommendedName>
    <alternativeName>
        <fullName evidence="2">Eukaryotic translation initiation factor 3 subunit 3</fullName>
    </alternativeName>
</protein>
<keyword id="KW-0963">Cytoplasm</keyword>
<keyword id="KW-0396">Initiation factor</keyword>
<keyword id="KW-0648">Protein biosynthesis</keyword>
<keyword id="KW-1185">Reference proteome</keyword>
<accession>B4JAS7</accession>
<name>EIF3H_DROGR</name>
<evidence type="ECO:0000250" key="1">
    <source>
        <dbReference type="UniProtKB" id="Q9U9Q4"/>
    </source>
</evidence>
<evidence type="ECO:0000255" key="2">
    <source>
        <dbReference type="HAMAP-Rule" id="MF_03007"/>
    </source>
</evidence>
<evidence type="ECO:0000255" key="3">
    <source>
        <dbReference type="PROSITE-ProRule" id="PRU01182"/>
    </source>
</evidence>
<reference key="1">
    <citation type="journal article" date="2007" name="Nature">
        <title>Evolution of genes and genomes on the Drosophila phylogeny.</title>
        <authorList>
            <consortium name="Drosophila 12 genomes consortium"/>
        </authorList>
    </citation>
    <scope>NUCLEOTIDE SEQUENCE [LARGE SCALE GENOMIC DNA]</scope>
    <source>
        <strain>Tucson 15287-2541.00</strain>
    </source>
</reference>
<proteinExistence type="inferred from homology"/>